<accession>Q32EI8</accession>
<protein>
    <recommendedName>
        <fullName evidence="1">Methionine--tRNA ligase</fullName>
        <ecNumber evidence="1">6.1.1.10</ecNumber>
    </recommendedName>
    <alternativeName>
        <fullName evidence="1">Methionyl-tRNA synthetase</fullName>
        <shortName evidence="1">MetRS</shortName>
    </alternativeName>
</protein>
<name>SYM_SHIDS</name>
<sequence>MTQVAKQILVTCALPYANGSIHLGHMLEHIQADVWVRYQRMRGHEVNFICADDAHGTPIMLKAQQLGITPEQMIGEMSQEHQTDFAGFNISYDNYHSTHSEENRQLSELIYSRLKENGFIKNRTISQLYDPEKGMFLPDRFVKGTCPKCKSPDQYGDNCEVCGATYSPTELIEPKSVVSGATPVMRDSEHFFFDLPSFSEMLQAWTRSGALQEQVANKMQEWFESGLQQWDISRDAPYFGFEIPNAPGKYFYVWLDAPIGYMGSFKNLCDKRGDSVSFDEYWKKDSTAELYHFIGKDIVYFHSLFWPAMLEGSNFRKPTNLFVHGYVTVNSAKMSKSRGTFIKASTWLNHFDADSLRYYYTAKLSSRIDDIDLNLEDFVQRVNADIVNKVVNLASRNAGFINKRFDGVLASELADPELYKTFTDAAEVIGEAWESREFGKAVREIMALADLANRYVDEQAPWVVAKQEGRDADLQAICSMGINLFRVLMTYLKPVLPKLTERAEAFLNTELTWDGIQQPLLGHKVNPFKALYNRIDMKQVEALVEASKEEVKAAAAPVTGPLADDPIQETITFDDFAKVDLRVALIENAEFVEGSDKLLRLTLDLGGEKRNVFSGIRSAYPDPQALIGRHTIMVANLAPRKMRFGISEGMVMAAGPGGKDIFLLSPDAGAKPGHQVK</sequence>
<dbReference type="EC" id="6.1.1.10" evidence="1"/>
<dbReference type="EMBL" id="CP000034">
    <property type="protein sequence ID" value="ABB62267.1"/>
    <property type="molecule type" value="Genomic_DNA"/>
</dbReference>
<dbReference type="RefSeq" id="WP_011378786.1">
    <property type="nucleotide sequence ID" value="NC_007606.1"/>
</dbReference>
<dbReference type="RefSeq" id="YP_403758.1">
    <property type="nucleotide sequence ID" value="NC_007606.1"/>
</dbReference>
<dbReference type="SMR" id="Q32EI8"/>
<dbReference type="STRING" id="300267.SDY_2181"/>
<dbReference type="EnsemblBacteria" id="ABB62267">
    <property type="protein sequence ID" value="ABB62267"/>
    <property type="gene ID" value="SDY_2181"/>
</dbReference>
<dbReference type="KEGG" id="sdy:SDY_2181"/>
<dbReference type="PATRIC" id="fig|300267.13.peg.2637"/>
<dbReference type="HOGENOM" id="CLU_009710_7_0_6"/>
<dbReference type="Proteomes" id="UP000002716">
    <property type="component" value="Chromosome"/>
</dbReference>
<dbReference type="GO" id="GO:0005829">
    <property type="term" value="C:cytosol"/>
    <property type="evidence" value="ECO:0007669"/>
    <property type="project" value="TreeGrafter"/>
</dbReference>
<dbReference type="GO" id="GO:0005524">
    <property type="term" value="F:ATP binding"/>
    <property type="evidence" value="ECO:0007669"/>
    <property type="project" value="UniProtKB-UniRule"/>
</dbReference>
<dbReference type="GO" id="GO:0046872">
    <property type="term" value="F:metal ion binding"/>
    <property type="evidence" value="ECO:0007669"/>
    <property type="project" value="UniProtKB-KW"/>
</dbReference>
<dbReference type="GO" id="GO:0004825">
    <property type="term" value="F:methionine-tRNA ligase activity"/>
    <property type="evidence" value="ECO:0007669"/>
    <property type="project" value="UniProtKB-UniRule"/>
</dbReference>
<dbReference type="GO" id="GO:0000049">
    <property type="term" value="F:tRNA binding"/>
    <property type="evidence" value="ECO:0007669"/>
    <property type="project" value="UniProtKB-KW"/>
</dbReference>
<dbReference type="GO" id="GO:0006431">
    <property type="term" value="P:methionyl-tRNA aminoacylation"/>
    <property type="evidence" value="ECO:0007669"/>
    <property type="project" value="UniProtKB-UniRule"/>
</dbReference>
<dbReference type="CDD" id="cd07957">
    <property type="entry name" value="Anticodon_Ia_Met"/>
    <property type="match status" value="1"/>
</dbReference>
<dbReference type="CDD" id="cd00814">
    <property type="entry name" value="MetRS_core"/>
    <property type="match status" value="1"/>
</dbReference>
<dbReference type="CDD" id="cd02800">
    <property type="entry name" value="tRNA_bind_EcMetRS_like"/>
    <property type="match status" value="1"/>
</dbReference>
<dbReference type="FunFam" id="1.10.730.10:FF:000005">
    <property type="entry name" value="Methionine--tRNA ligase"/>
    <property type="match status" value="1"/>
</dbReference>
<dbReference type="FunFam" id="2.20.28.20:FF:000001">
    <property type="entry name" value="Methionine--tRNA ligase"/>
    <property type="match status" value="1"/>
</dbReference>
<dbReference type="FunFam" id="2.40.50.140:FF:000042">
    <property type="entry name" value="Methionine--tRNA ligase"/>
    <property type="match status" value="1"/>
</dbReference>
<dbReference type="Gene3D" id="3.40.50.620">
    <property type="entry name" value="HUPs"/>
    <property type="match status" value="1"/>
</dbReference>
<dbReference type="Gene3D" id="1.10.730.10">
    <property type="entry name" value="Isoleucyl-tRNA Synthetase, Domain 1"/>
    <property type="match status" value="1"/>
</dbReference>
<dbReference type="Gene3D" id="2.20.28.20">
    <property type="entry name" value="Methionyl-tRNA synthetase, Zn-domain"/>
    <property type="match status" value="1"/>
</dbReference>
<dbReference type="Gene3D" id="2.40.50.140">
    <property type="entry name" value="Nucleic acid-binding proteins"/>
    <property type="match status" value="1"/>
</dbReference>
<dbReference type="HAMAP" id="MF_00098">
    <property type="entry name" value="Met_tRNA_synth_type1"/>
    <property type="match status" value="1"/>
</dbReference>
<dbReference type="InterPro" id="IPR001412">
    <property type="entry name" value="aa-tRNA-synth_I_CS"/>
</dbReference>
<dbReference type="InterPro" id="IPR041872">
    <property type="entry name" value="Anticodon_Met"/>
</dbReference>
<dbReference type="InterPro" id="IPR004495">
    <property type="entry name" value="Met-tRNA-synth_bsu_C"/>
</dbReference>
<dbReference type="InterPro" id="IPR023458">
    <property type="entry name" value="Met-tRNA_ligase_1"/>
</dbReference>
<dbReference type="InterPro" id="IPR014758">
    <property type="entry name" value="Met-tRNA_synth"/>
</dbReference>
<dbReference type="InterPro" id="IPR015413">
    <property type="entry name" value="Methionyl/Leucyl_tRNA_Synth"/>
</dbReference>
<dbReference type="InterPro" id="IPR033911">
    <property type="entry name" value="MetRS_core"/>
</dbReference>
<dbReference type="InterPro" id="IPR029038">
    <property type="entry name" value="MetRS_Zn"/>
</dbReference>
<dbReference type="InterPro" id="IPR012340">
    <property type="entry name" value="NA-bd_OB-fold"/>
</dbReference>
<dbReference type="InterPro" id="IPR014729">
    <property type="entry name" value="Rossmann-like_a/b/a_fold"/>
</dbReference>
<dbReference type="InterPro" id="IPR002547">
    <property type="entry name" value="tRNA-bd_dom"/>
</dbReference>
<dbReference type="InterPro" id="IPR009080">
    <property type="entry name" value="tRNAsynth_Ia_anticodon-bd"/>
</dbReference>
<dbReference type="NCBIfam" id="TIGR00398">
    <property type="entry name" value="metG"/>
    <property type="match status" value="1"/>
</dbReference>
<dbReference type="NCBIfam" id="TIGR00399">
    <property type="entry name" value="metG_C_term"/>
    <property type="match status" value="1"/>
</dbReference>
<dbReference type="NCBIfam" id="NF001100">
    <property type="entry name" value="PRK00133.1"/>
    <property type="match status" value="1"/>
</dbReference>
<dbReference type="PANTHER" id="PTHR45765">
    <property type="entry name" value="METHIONINE--TRNA LIGASE"/>
    <property type="match status" value="1"/>
</dbReference>
<dbReference type="PANTHER" id="PTHR45765:SF1">
    <property type="entry name" value="METHIONINE--TRNA LIGASE, CYTOPLASMIC"/>
    <property type="match status" value="1"/>
</dbReference>
<dbReference type="Pfam" id="PF19303">
    <property type="entry name" value="Anticodon_3"/>
    <property type="match status" value="1"/>
</dbReference>
<dbReference type="Pfam" id="PF09334">
    <property type="entry name" value="tRNA-synt_1g"/>
    <property type="match status" value="1"/>
</dbReference>
<dbReference type="Pfam" id="PF01588">
    <property type="entry name" value="tRNA_bind"/>
    <property type="match status" value="1"/>
</dbReference>
<dbReference type="PRINTS" id="PR01041">
    <property type="entry name" value="TRNASYNTHMET"/>
</dbReference>
<dbReference type="SUPFAM" id="SSF47323">
    <property type="entry name" value="Anticodon-binding domain of a subclass of class I aminoacyl-tRNA synthetases"/>
    <property type="match status" value="1"/>
</dbReference>
<dbReference type="SUPFAM" id="SSF57770">
    <property type="entry name" value="Methionyl-tRNA synthetase (MetRS), Zn-domain"/>
    <property type="match status" value="1"/>
</dbReference>
<dbReference type="SUPFAM" id="SSF50249">
    <property type="entry name" value="Nucleic acid-binding proteins"/>
    <property type="match status" value="1"/>
</dbReference>
<dbReference type="SUPFAM" id="SSF52374">
    <property type="entry name" value="Nucleotidylyl transferase"/>
    <property type="match status" value="1"/>
</dbReference>
<dbReference type="PROSITE" id="PS00178">
    <property type="entry name" value="AA_TRNA_LIGASE_I"/>
    <property type="match status" value="1"/>
</dbReference>
<dbReference type="PROSITE" id="PS50886">
    <property type="entry name" value="TRBD"/>
    <property type="match status" value="1"/>
</dbReference>
<evidence type="ECO:0000255" key="1">
    <source>
        <dbReference type="HAMAP-Rule" id="MF_00098"/>
    </source>
</evidence>
<keyword id="KW-0030">Aminoacyl-tRNA synthetase</keyword>
<keyword id="KW-0067">ATP-binding</keyword>
<keyword id="KW-0963">Cytoplasm</keyword>
<keyword id="KW-0436">Ligase</keyword>
<keyword id="KW-0479">Metal-binding</keyword>
<keyword id="KW-0547">Nucleotide-binding</keyword>
<keyword id="KW-0648">Protein biosynthesis</keyword>
<keyword id="KW-1185">Reference proteome</keyword>
<keyword id="KW-0694">RNA-binding</keyword>
<keyword id="KW-0820">tRNA-binding</keyword>
<keyword id="KW-0862">Zinc</keyword>
<gene>
    <name evidence="1" type="primary">metG</name>
    <name type="ordered locus">SDY_2181</name>
</gene>
<organism>
    <name type="scientific">Shigella dysenteriae serotype 1 (strain Sd197)</name>
    <dbReference type="NCBI Taxonomy" id="300267"/>
    <lineage>
        <taxon>Bacteria</taxon>
        <taxon>Pseudomonadati</taxon>
        <taxon>Pseudomonadota</taxon>
        <taxon>Gammaproteobacteria</taxon>
        <taxon>Enterobacterales</taxon>
        <taxon>Enterobacteriaceae</taxon>
        <taxon>Shigella</taxon>
    </lineage>
</organism>
<comment type="function">
    <text evidence="1">Is required not only for elongation of protein synthesis but also for the initiation of all mRNA translation through initiator tRNA(fMet) aminoacylation.</text>
</comment>
<comment type="catalytic activity">
    <reaction evidence="1">
        <text>tRNA(Met) + L-methionine + ATP = L-methionyl-tRNA(Met) + AMP + diphosphate</text>
        <dbReference type="Rhea" id="RHEA:13481"/>
        <dbReference type="Rhea" id="RHEA-COMP:9667"/>
        <dbReference type="Rhea" id="RHEA-COMP:9698"/>
        <dbReference type="ChEBI" id="CHEBI:30616"/>
        <dbReference type="ChEBI" id="CHEBI:33019"/>
        <dbReference type="ChEBI" id="CHEBI:57844"/>
        <dbReference type="ChEBI" id="CHEBI:78442"/>
        <dbReference type="ChEBI" id="CHEBI:78530"/>
        <dbReference type="ChEBI" id="CHEBI:456215"/>
        <dbReference type="EC" id="6.1.1.10"/>
    </reaction>
</comment>
<comment type="cofactor">
    <cofactor evidence="1">
        <name>Zn(2+)</name>
        <dbReference type="ChEBI" id="CHEBI:29105"/>
    </cofactor>
    <text evidence="1">Binds 1 zinc ion per subunit.</text>
</comment>
<comment type="subunit">
    <text evidence="1">Homodimer.</text>
</comment>
<comment type="subcellular location">
    <subcellularLocation>
        <location evidence="1">Cytoplasm</location>
    </subcellularLocation>
</comment>
<comment type="similarity">
    <text evidence="1">Belongs to the class-I aminoacyl-tRNA synthetase family. MetG type 1 subfamily.</text>
</comment>
<feature type="chain" id="PRO_0000331914" description="Methionine--tRNA ligase">
    <location>
        <begin position="1"/>
        <end position="677"/>
    </location>
</feature>
<feature type="domain" description="tRNA-binding" evidence="1">
    <location>
        <begin position="575"/>
        <end position="677"/>
    </location>
</feature>
<feature type="short sequence motif" description="'HIGH' region">
    <location>
        <begin position="15"/>
        <end position="25"/>
    </location>
</feature>
<feature type="short sequence motif" description="'KMSKS' region">
    <location>
        <begin position="333"/>
        <end position="337"/>
    </location>
</feature>
<feature type="binding site" evidence="1">
    <location>
        <position position="146"/>
    </location>
    <ligand>
        <name>Zn(2+)</name>
        <dbReference type="ChEBI" id="CHEBI:29105"/>
    </ligand>
</feature>
<feature type="binding site" evidence="1">
    <location>
        <position position="149"/>
    </location>
    <ligand>
        <name>Zn(2+)</name>
        <dbReference type="ChEBI" id="CHEBI:29105"/>
    </ligand>
</feature>
<feature type="binding site" evidence="1">
    <location>
        <position position="159"/>
    </location>
    <ligand>
        <name>Zn(2+)</name>
        <dbReference type="ChEBI" id="CHEBI:29105"/>
    </ligand>
</feature>
<feature type="binding site" evidence="1">
    <location>
        <position position="162"/>
    </location>
    <ligand>
        <name>Zn(2+)</name>
        <dbReference type="ChEBI" id="CHEBI:29105"/>
    </ligand>
</feature>
<feature type="binding site" evidence="1">
    <location>
        <position position="336"/>
    </location>
    <ligand>
        <name>ATP</name>
        <dbReference type="ChEBI" id="CHEBI:30616"/>
    </ligand>
</feature>
<reference key="1">
    <citation type="journal article" date="2005" name="Nucleic Acids Res.">
        <title>Genome dynamics and diversity of Shigella species, the etiologic agents of bacillary dysentery.</title>
        <authorList>
            <person name="Yang F."/>
            <person name="Yang J."/>
            <person name="Zhang X."/>
            <person name="Chen L."/>
            <person name="Jiang Y."/>
            <person name="Yan Y."/>
            <person name="Tang X."/>
            <person name="Wang J."/>
            <person name="Xiong Z."/>
            <person name="Dong J."/>
            <person name="Xue Y."/>
            <person name="Zhu Y."/>
            <person name="Xu X."/>
            <person name="Sun L."/>
            <person name="Chen S."/>
            <person name="Nie H."/>
            <person name="Peng J."/>
            <person name="Xu J."/>
            <person name="Wang Y."/>
            <person name="Yuan Z."/>
            <person name="Wen Y."/>
            <person name="Yao Z."/>
            <person name="Shen Y."/>
            <person name="Qiang B."/>
            <person name="Hou Y."/>
            <person name="Yu J."/>
            <person name="Jin Q."/>
        </authorList>
    </citation>
    <scope>NUCLEOTIDE SEQUENCE [LARGE SCALE GENOMIC DNA]</scope>
    <source>
        <strain>Sd197</strain>
    </source>
</reference>
<proteinExistence type="inferred from homology"/>